<dbReference type="EMBL" id="AE005174">
    <property type="protein sequence ID" value="AAG56646.1"/>
    <property type="molecule type" value="Genomic_DNA"/>
</dbReference>
<dbReference type="EMBL" id="BA000007">
    <property type="protein sequence ID" value="BAB35789.1"/>
    <property type="molecule type" value="Genomic_DNA"/>
</dbReference>
<dbReference type="PIR" id="B85773">
    <property type="entry name" value="B85773"/>
</dbReference>
<dbReference type="PIR" id="F90924">
    <property type="entry name" value="F90924"/>
</dbReference>
<dbReference type="RefSeq" id="NP_310393.1">
    <property type="nucleotide sequence ID" value="NC_002695.1"/>
</dbReference>
<dbReference type="RefSeq" id="WP_000701046.1">
    <property type="nucleotide sequence ID" value="NZ_VOAI01000007.1"/>
</dbReference>
<dbReference type="SMR" id="Q8X625"/>
<dbReference type="STRING" id="155864.Z2679"/>
<dbReference type="GeneID" id="912314"/>
<dbReference type="KEGG" id="ece:Z2679"/>
<dbReference type="KEGG" id="ecs:ECs_2366"/>
<dbReference type="PATRIC" id="fig|386585.9.peg.2477"/>
<dbReference type="eggNOG" id="COG2814">
    <property type="taxonomic scope" value="Bacteria"/>
</dbReference>
<dbReference type="HOGENOM" id="CLU_001265_61_2_6"/>
<dbReference type="OMA" id="IAPMMTH"/>
<dbReference type="Proteomes" id="UP000000558">
    <property type="component" value="Chromosome"/>
</dbReference>
<dbReference type="Proteomes" id="UP000002519">
    <property type="component" value="Chromosome"/>
</dbReference>
<dbReference type="GO" id="GO:0005886">
    <property type="term" value="C:plasma membrane"/>
    <property type="evidence" value="ECO:0007669"/>
    <property type="project" value="UniProtKB-SubCell"/>
</dbReference>
<dbReference type="GO" id="GO:0022857">
    <property type="term" value="F:transmembrane transporter activity"/>
    <property type="evidence" value="ECO:0007669"/>
    <property type="project" value="InterPro"/>
</dbReference>
<dbReference type="CDD" id="cd17324">
    <property type="entry name" value="MFS_NepI_like"/>
    <property type="match status" value="1"/>
</dbReference>
<dbReference type="FunFam" id="1.20.1250.20:FF:000104">
    <property type="entry name" value="Inner membrane transporter ydhP"/>
    <property type="match status" value="1"/>
</dbReference>
<dbReference type="Gene3D" id="1.20.1250.20">
    <property type="entry name" value="MFS general substrate transporter like domains"/>
    <property type="match status" value="1"/>
</dbReference>
<dbReference type="InterPro" id="IPR011701">
    <property type="entry name" value="MFS"/>
</dbReference>
<dbReference type="InterPro" id="IPR020846">
    <property type="entry name" value="MFS_dom"/>
</dbReference>
<dbReference type="InterPro" id="IPR050189">
    <property type="entry name" value="MFS_Efflux_Transporters"/>
</dbReference>
<dbReference type="InterPro" id="IPR036259">
    <property type="entry name" value="MFS_trans_sf"/>
</dbReference>
<dbReference type="PANTHER" id="PTHR43124:SF8">
    <property type="entry name" value="INNER MEMBRANE TRANSPORT PROTEIN YDHP"/>
    <property type="match status" value="1"/>
</dbReference>
<dbReference type="PANTHER" id="PTHR43124">
    <property type="entry name" value="PURINE EFFLUX PUMP PBUE"/>
    <property type="match status" value="1"/>
</dbReference>
<dbReference type="Pfam" id="PF07690">
    <property type="entry name" value="MFS_1"/>
    <property type="match status" value="1"/>
</dbReference>
<dbReference type="SUPFAM" id="SSF103473">
    <property type="entry name" value="MFS general substrate transporter"/>
    <property type="match status" value="1"/>
</dbReference>
<dbReference type="PROSITE" id="PS50850">
    <property type="entry name" value="MFS"/>
    <property type="match status" value="1"/>
</dbReference>
<feature type="chain" id="PRO_0000173403" description="Inner membrane transport protein YdhP">
    <location>
        <begin position="1"/>
        <end position="389"/>
    </location>
</feature>
<feature type="topological domain" description="Cytoplasmic" evidence="2">
    <location>
        <begin position="1"/>
        <end position="6"/>
    </location>
</feature>
<feature type="transmembrane region" description="Helical" evidence="2">
    <location>
        <begin position="7"/>
        <end position="27"/>
    </location>
</feature>
<feature type="topological domain" description="Periplasmic" evidence="2">
    <location>
        <begin position="28"/>
        <end position="43"/>
    </location>
</feature>
<feature type="transmembrane region" description="Helical" evidence="2">
    <location>
        <begin position="44"/>
        <end position="64"/>
    </location>
</feature>
<feature type="topological domain" description="Cytoplasmic" evidence="2">
    <location>
        <begin position="65"/>
        <end position="70"/>
    </location>
</feature>
<feature type="transmembrane region" description="Helical" evidence="2">
    <location>
        <begin position="71"/>
        <end position="91"/>
    </location>
</feature>
<feature type="topological domain" description="Periplasmic" evidence="2">
    <location>
        <begin position="92"/>
        <end position="100"/>
    </location>
</feature>
<feature type="transmembrane region" description="Helical" evidence="2">
    <location>
        <begin position="101"/>
        <end position="121"/>
    </location>
</feature>
<feature type="topological domain" description="Cytoplasmic" evidence="2">
    <location>
        <begin position="122"/>
        <end position="130"/>
    </location>
</feature>
<feature type="transmembrane region" description="Helical" evidence="2">
    <location>
        <begin position="131"/>
        <end position="151"/>
    </location>
</feature>
<feature type="topological domain" description="Periplasmic" evidence="2">
    <location>
        <begin position="152"/>
        <end position="159"/>
    </location>
</feature>
<feature type="transmembrane region" description="Helical" evidence="2">
    <location>
        <begin position="160"/>
        <end position="180"/>
    </location>
</feature>
<feature type="topological domain" description="Cytoplasmic" evidence="2">
    <location>
        <begin position="181"/>
        <end position="203"/>
    </location>
</feature>
<feature type="transmembrane region" description="Helical" evidence="2">
    <location>
        <begin position="204"/>
        <end position="224"/>
    </location>
</feature>
<feature type="topological domain" description="Periplasmic" evidence="2">
    <location>
        <begin position="225"/>
        <end position="236"/>
    </location>
</feature>
<feature type="transmembrane region" description="Helical" evidence="2">
    <location>
        <begin position="237"/>
        <end position="257"/>
    </location>
</feature>
<feature type="topological domain" description="Cytoplasmic" evidence="2">
    <location>
        <begin position="258"/>
        <end position="266"/>
    </location>
</feature>
<feature type="transmembrane region" description="Helical" evidence="2">
    <location>
        <begin position="267"/>
        <end position="287"/>
    </location>
</feature>
<feature type="topological domain" description="Periplasmic" evidence="2">
    <location>
        <begin position="288"/>
        <end position="290"/>
    </location>
</feature>
<feature type="transmembrane region" description="Helical" evidence="2">
    <location>
        <begin position="291"/>
        <end position="311"/>
    </location>
</feature>
<feature type="topological domain" description="Cytoplasmic" evidence="2">
    <location>
        <begin position="312"/>
        <end position="330"/>
    </location>
</feature>
<feature type="transmembrane region" description="Helical" evidence="2">
    <location>
        <begin position="331"/>
        <end position="351"/>
    </location>
</feature>
<feature type="topological domain" description="Periplasmic" evidence="2">
    <location>
        <begin position="352"/>
        <end position="356"/>
    </location>
</feature>
<feature type="transmembrane region" description="Helical" evidence="2">
    <location>
        <begin position="357"/>
        <end position="377"/>
    </location>
</feature>
<feature type="topological domain" description="Cytoplasmic" evidence="2">
    <location>
        <begin position="378"/>
        <end position="389"/>
    </location>
</feature>
<organism>
    <name type="scientific">Escherichia coli O157:H7</name>
    <dbReference type="NCBI Taxonomy" id="83334"/>
    <lineage>
        <taxon>Bacteria</taxon>
        <taxon>Pseudomonadati</taxon>
        <taxon>Pseudomonadota</taxon>
        <taxon>Gammaproteobacteria</taxon>
        <taxon>Enterobacterales</taxon>
        <taxon>Enterobacteriaceae</taxon>
        <taxon>Escherichia</taxon>
    </lineage>
</organism>
<sequence>MKINYPLLALAIGAFGIGTTEFSPMGLLPVIARGVDVSIPAAGMLISAYAVGVMVGAPLMTLLLSHRARRSALIFLMAIFTLGNVLSAIAPDYMTLMLSRILTSLNHGAFFGLGSVVAASVVPKHKQASAVATMFMGLTLANIGGVPAATWLGETIGWRMSFLATAGLGVISMVSLFFSLPKGGAGARPEVKKELAVLMRPQVLSALLTTVLGAGAMFTLYTYISPVLQSITHATPVFVTAMLVLIGVGFSIGNYLGGKLADRSVNGTLKGFLLLLMVIMLAIPFLARNKFGAAISMAVWGAATFAVVPPLQMRVMRVASEAPGLSSSVNIGAFNLGNALGAAAGGAVISAGLGYSFVPVMGAIVAGLALLLVFMSARKQPETVCVANS</sequence>
<protein>
    <recommendedName>
        <fullName>Inner membrane transport protein YdhP</fullName>
    </recommendedName>
</protein>
<evidence type="ECO:0000250" key="1"/>
<evidence type="ECO:0000255" key="2"/>
<evidence type="ECO:0000305" key="3"/>
<gene>
    <name type="primary">ydhP</name>
    <name type="ordered locus">Z2679</name>
    <name type="ordered locus">ECs2366</name>
</gene>
<proteinExistence type="inferred from homology"/>
<name>YDHP_ECO57</name>
<keyword id="KW-0997">Cell inner membrane</keyword>
<keyword id="KW-1003">Cell membrane</keyword>
<keyword id="KW-0472">Membrane</keyword>
<keyword id="KW-1185">Reference proteome</keyword>
<keyword id="KW-0812">Transmembrane</keyword>
<keyword id="KW-1133">Transmembrane helix</keyword>
<keyword id="KW-0813">Transport</keyword>
<comment type="subcellular location">
    <subcellularLocation>
        <location evidence="1">Cell inner membrane</location>
        <topology evidence="1">Multi-pass membrane protein</topology>
    </subcellularLocation>
</comment>
<comment type="similarity">
    <text evidence="3">Belongs to the major facilitator superfamily.</text>
</comment>
<accession>Q8X625</accession>
<reference key="1">
    <citation type="journal article" date="2001" name="Nature">
        <title>Genome sequence of enterohaemorrhagic Escherichia coli O157:H7.</title>
        <authorList>
            <person name="Perna N.T."/>
            <person name="Plunkett G. III"/>
            <person name="Burland V."/>
            <person name="Mau B."/>
            <person name="Glasner J.D."/>
            <person name="Rose D.J."/>
            <person name="Mayhew G.F."/>
            <person name="Evans P.S."/>
            <person name="Gregor J."/>
            <person name="Kirkpatrick H.A."/>
            <person name="Posfai G."/>
            <person name="Hackett J."/>
            <person name="Klink S."/>
            <person name="Boutin A."/>
            <person name="Shao Y."/>
            <person name="Miller L."/>
            <person name="Grotbeck E.J."/>
            <person name="Davis N.W."/>
            <person name="Lim A."/>
            <person name="Dimalanta E.T."/>
            <person name="Potamousis K."/>
            <person name="Apodaca J."/>
            <person name="Anantharaman T.S."/>
            <person name="Lin J."/>
            <person name="Yen G."/>
            <person name="Schwartz D.C."/>
            <person name="Welch R.A."/>
            <person name="Blattner F.R."/>
        </authorList>
    </citation>
    <scope>NUCLEOTIDE SEQUENCE [LARGE SCALE GENOMIC DNA]</scope>
    <source>
        <strain>O157:H7 / EDL933 / ATCC 700927 / EHEC</strain>
    </source>
</reference>
<reference key="2">
    <citation type="journal article" date="2001" name="DNA Res.">
        <title>Complete genome sequence of enterohemorrhagic Escherichia coli O157:H7 and genomic comparison with a laboratory strain K-12.</title>
        <authorList>
            <person name="Hayashi T."/>
            <person name="Makino K."/>
            <person name="Ohnishi M."/>
            <person name="Kurokawa K."/>
            <person name="Ishii K."/>
            <person name="Yokoyama K."/>
            <person name="Han C.-G."/>
            <person name="Ohtsubo E."/>
            <person name="Nakayama K."/>
            <person name="Murata T."/>
            <person name="Tanaka M."/>
            <person name="Tobe T."/>
            <person name="Iida T."/>
            <person name="Takami H."/>
            <person name="Honda T."/>
            <person name="Sasakawa C."/>
            <person name="Ogasawara N."/>
            <person name="Yasunaga T."/>
            <person name="Kuhara S."/>
            <person name="Shiba T."/>
            <person name="Hattori M."/>
            <person name="Shinagawa H."/>
        </authorList>
    </citation>
    <scope>NUCLEOTIDE SEQUENCE [LARGE SCALE GENOMIC DNA]</scope>
    <source>
        <strain>O157:H7 / Sakai / RIMD 0509952 / EHEC</strain>
    </source>
</reference>